<reference key="1">
    <citation type="journal article" date="2011" name="PLoS ONE">
        <title>The genome of Akkermansia muciniphila, a dedicated intestinal mucin degrader, and its use in exploring intestinal metagenomes.</title>
        <authorList>
            <person name="van Passel M.W."/>
            <person name="Kant R."/>
            <person name="Zoetendal E.G."/>
            <person name="Plugge C.M."/>
            <person name="Derrien M."/>
            <person name="Malfatti S.A."/>
            <person name="Chain P.S."/>
            <person name="Woyke T."/>
            <person name="Palva A."/>
            <person name="de Vos W.M."/>
            <person name="Smidt H."/>
        </authorList>
    </citation>
    <scope>NUCLEOTIDE SEQUENCE [LARGE SCALE GENOMIC DNA]</scope>
    <source>
        <strain>ATCC BAA-835 / DSM 22959 / JCM 33894 / BCRC 81048 / CCUG 64013 / CIP 107961 / Muc</strain>
    </source>
</reference>
<keyword id="KW-0342">GTP-binding</keyword>
<keyword id="KW-0547">Nucleotide-binding</keyword>
<keyword id="KW-1185">Reference proteome</keyword>
<keyword id="KW-0677">Repeat</keyword>
<keyword id="KW-0690">Ribosome biogenesis</keyword>
<name>DER_AKKM8</name>
<accession>B2UMV5</accession>
<comment type="function">
    <text evidence="1">GTPase that plays an essential role in the late steps of ribosome biogenesis.</text>
</comment>
<comment type="subunit">
    <text evidence="1">Associates with the 50S ribosomal subunit.</text>
</comment>
<comment type="similarity">
    <text evidence="1">Belongs to the TRAFAC class TrmE-Era-EngA-EngB-Septin-like GTPase superfamily. EngA (Der) GTPase family.</text>
</comment>
<sequence>MQHVPTIAIVGRPNVGKSAIFNRMAGRRIAIVHDEPGVTRDRLSAPCKITDRACKIMDTGGIGARLSDGFAEQVEAEADIAIKTADLILFVLDCRDHLTPIDQSIADHLRKSDIPVILLLNKADHEKQDLNLGEFAGLGFDDHIFLSAAHGRGFSELASRLDGFLKQKGAPLKEELEEEPENGEETALPIKVAVVGRPNAGKSSLVNAILRDRRTIVSNVAGTTRDAIDVPYLHDGQPYVLIDTAGMRPRSRRDTSVEVFSAMRSEKAIRRADICLLVIDIAAGITQQDRRIAGIIAEEGKPCIIIVNKFDLFHPNASRKDRMAEVEEQVRRELFFISYAPFIATSAKKAEGVEIIFKVITRIRRESHNLPTTGQLNRLIQLAQQMNPPGAASGSARRLKIYYATTAVDPKYNTIPVPRYVLFVNDKSLLTDSYSQYLRNKIREAYPAPGIPVIFSARSRVRND</sequence>
<protein>
    <recommendedName>
        <fullName evidence="1">GTPase Der</fullName>
    </recommendedName>
    <alternativeName>
        <fullName evidence="1">GTP-binding protein EngA</fullName>
    </alternativeName>
</protein>
<proteinExistence type="inferred from homology"/>
<gene>
    <name evidence="1" type="primary">der</name>
    <name type="synonym">engA</name>
    <name type="ordered locus">Amuc_0319</name>
</gene>
<evidence type="ECO:0000255" key="1">
    <source>
        <dbReference type="HAMAP-Rule" id="MF_00195"/>
    </source>
</evidence>
<organism>
    <name type="scientific">Akkermansia muciniphila (strain ATCC BAA-835 / DSM 22959 / JCM 33894 / BCRC 81048 / CCUG 64013 / CIP 107961 / Muc)</name>
    <dbReference type="NCBI Taxonomy" id="349741"/>
    <lineage>
        <taxon>Bacteria</taxon>
        <taxon>Pseudomonadati</taxon>
        <taxon>Verrucomicrobiota</taxon>
        <taxon>Verrucomicrobiia</taxon>
        <taxon>Verrucomicrobiales</taxon>
        <taxon>Akkermansiaceae</taxon>
        <taxon>Akkermansia</taxon>
    </lineage>
</organism>
<dbReference type="EMBL" id="CP001071">
    <property type="protein sequence ID" value="ACD04161.1"/>
    <property type="molecule type" value="Genomic_DNA"/>
</dbReference>
<dbReference type="RefSeq" id="WP_012419376.1">
    <property type="nucleotide sequence ID" value="NZ_CP071807.1"/>
</dbReference>
<dbReference type="SMR" id="B2UMV5"/>
<dbReference type="STRING" id="349741.Amuc_0319"/>
<dbReference type="PaxDb" id="349741-Amuc_0319"/>
<dbReference type="GeneID" id="60879797"/>
<dbReference type="KEGG" id="amu:Amuc_0319"/>
<dbReference type="eggNOG" id="COG1160">
    <property type="taxonomic scope" value="Bacteria"/>
</dbReference>
<dbReference type="HOGENOM" id="CLU_016077_6_2_0"/>
<dbReference type="OrthoDB" id="9805918at2"/>
<dbReference type="BioCyc" id="AMUC349741:G1GBX-361-MONOMER"/>
<dbReference type="Proteomes" id="UP000001031">
    <property type="component" value="Chromosome"/>
</dbReference>
<dbReference type="GO" id="GO:0005525">
    <property type="term" value="F:GTP binding"/>
    <property type="evidence" value="ECO:0007669"/>
    <property type="project" value="UniProtKB-UniRule"/>
</dbReference>
<dbReference type="GO" id="GO:0043022">
    <property type="term" value="F:ribosome binding"/>
    <property type="evidence" value="ECO:0007669"/>
    <property type="project" value="TreeGrafter"/>
</dbReference>
<dbReference type="GO" id="GO:0042254">
    <property type="term" value="P:ribosome biogenesis"/>
    <property type="evidence" value="ECO:0007669"/>
    <property type="project" value="UniProtKB-KW"/>
</dbReference>
<dbReference type="CDD" id="cd01894">
    <property type="entry name" value="EngA1"/>
    <property type="match status" value="1"/>
</dbReference>
<dbReference type="CDD" id="cd01895">
    <property type="entry name" value="EngA2"/>
    <property type="match status" value="1"/>
</dbReference>
<dbReference type="FunFam" id="3.40.50.300:FF:000040">
    <property type="entry name" value="GTPase Der"/>
    <property type="match status" value="1"/>
</dbReference>
<dbReference type="Gene3D" id="3.30.300.20">
    <property type="match status" value="1"/>
</dbReference>
<dbReference type="Gene3D" id="3.40.50.300">
    <property type="entry name" value="P-loop containing nucleotide triphosphate hydrolases"/>
    <property type="match status" value="2"/>
</dbReference>
<dbReference type="HAMAP" id="MF_00195">
    <property type="entry name" value="GTPase_Der"/>
    <property type="match status" value="1"/>
</dbReference>
<dbReference type="InterPro" id="IPR031166">
    <property type="entry name" value="G_ENGA"/>
</dbReference>
<dbReference type="InterPro" id="IPR006073">
    <property type="entry name" value="GTP-bd"/>
</dbReference>
<dbReference type="InterPro" id="IPR016484">
    <property type="entry name" value="GTPase_Der"/>
</dbReference>
<dbReference type="InterPro" id="IPR032859">
    <property type="entry name" value="KH_dom-like"/>
</dbReference>
<dbReference type="InterPro" id="IPR015946">
    <property type="entry name" value="KH_dom-like_a/b"/>
</dbReference>
<dbReference type="InterPro" id="IPR027417">
    <property type="entry name" value="P-loop_NTPase"/>
</dbReference>
<dbReference type="InterPro" id="IPR005225">
    <property type="entry name" value="Small_GTP-bd"/>
</dbReference>
<dbReference type="NCBIfam" id="TIGR03594">
    <property type="entry name" value="GTPase_EngA"/>
    <property type="match status" value="1"/>
</dbReference>
<dbReference type="NCBIfam" id="TIGR00231">
    <property type="entry name" value="small_GTP"/>
    <property type="match status" value="2"/>
</dbReference>
<dbReference type="PANTHER" id="PTHR43834">
    <property type="entry name" value="GTPASE DER"/>
    <property type="match status" value="1"/>
</dbReference>
<dbReference type="PANTHER" id="PTHR43834:SF6">
    <property type="entry name" value="GTPASE DER"/>
    <property type="match status" value="1"/>
</dbReference>
<dbReference type="Pfam" id="PF14714">
    <property type="entry name" value="KH_dom-like"/>
    <property type="match status" value="1"/>
</dbReference>
<dbReference type="Pfam" id="PF01926">
    <property type="entry name" value="MMR_HSR1"/>
    <property type="match status" value="2"/>
</dbReference>
<dbReference type="PIRSF" id="PIRSF006485">
    <property type="entry name" value="GTP-binding_EngA"/>
    <property type="match status" value="1"/>
</dbReference>
<dbReference type="PRINTS" id="PR00449">
    <property type="entry name" value="RASTRNSFRMNG"/>
</dbReference>
<dbReference type="SMART" id="SM00173">
    <property type="entry name" value="RAS"/>
    <property type="match status" value="1"/>
</dbReference>
<dbReference type="SUPFAM" id="SSF52540">
    <property type="entry name" value="P-loop containing nucleoside triphosphate hydrolases"/>
    <property type="match status" value="2"/>
</dbReference>
<dbReference type="PROSITE" id="PS51712">
    <property type="entry name" value="G_ENGA"/>
    <property type="match status" value="2"/>
</dbReference>
<feature type="chain" id="PRO_1000099086" description="GTPase Der">
    <location>
        <begin position="1"/>
        <end position="464"/>
    </location>
</feature>
<feature type="domain" description="EngA-type G 1">
    <location>
        <begin position="5"/>
        <end position="169"/>
    </location>
</feature>
<feature type="domain" description="EngA-type G 2">
    <location>
        <begin position="190"/>
        <end position="368"/>
    </location>
</feature>
<feature type="domain" description="KH-like" evidence="1">
    <location>
        <begin position="369"/>
        <end position="461"/>
    </location>
</feature>
<feature type="binding site" evidence="1">
    <location>
        <begin position="11"/>
        <end position="18"/>
    </location>
    <ligand>
        <name>GTP</name>
        <dbReference type="ChEBI" id="CHEBI:37565"/>
        <label>1</label>
    </ligand>
</feature>
<feature type="binding site" evidence="1">
    <location>
        <begin position="58"/>
        <end position="62"/>
    </location>
    <ligand>
        <name>GTP</name>
        <dbReference type="ChEBI" id="CHEBI:37565"/>
        <label>1</label>
    </ligand>
</feature>
<feature type="binding site" evidence="1">
    <location>
        <begin position="121"/>
        <end position="124"/>
    </location>
    <ligand>
        <name>GTP</name>
        <dbReference type="ChEBI" id="CHEBI:37565"/>
        <label>1</label>
    </ligand>
</feature>
<feature type="binding site" evidence="1">
    <location>
        <begin position="196"/>
        <end position="203"/>
    </location>
    <ligand>
        <name>GTP</name>
        <dbReference type="ChEBI" id="CHEBI:37565"/>
        <label>2</label>
    </ligand>
</feature>
<feature type="binding site" evidence="1">
    <location>
        <begin position="243"/>
        <end position="247"/>
    </location>
    <ligand>
        <name>GTP</name>
        <dbReference type="ChEBI" id="CHEBI:37565"/>
        <label>2</label>
    </ligand>
</feature>
<feature type="binding site" evidence="1">
    <location>
        <begin position="308"/>
        <end position="311"/>
    </location>
    <ligand>
        <name>GTP</name>
        <dbReference type="ChEBI" id="CHEBI:37565"/>
        <label>2</label>
    </ligand>
</feature>